<proteinExistence type="inferred from homology"/>
<reference key="1">
    <citation type="submission" date="2007-11" db="EMBL/GenBank/DDBJ databases">
        <authorList>
            <consortium name="The Salmonella enterica serovar Paratyphi B Genome Sequencing Project"/>
            <person name="McClelland M."/>
            <person name="Sanderson E.K."/>
            <person name="Porwollik S."/>
            <person name="Spieth J."/>
            <person name="Clifton W.S."/>
            <person name="Fulton R."/>
            <person name="Cordes M."/>
            <person name="Wollam A."/>
            <person name="Shah N."/>
            <person name="Pepin K."/>
            <person name="Bhonagiri V."/>
            <person name="Nash W."/>
            <person name="Johnson M."/>
            <person name="Thiruvilangam P."/>
            <person name="Wilson R."/>
        </authorList>
    </citation>
    <scope>NUCLEOTIDE SEQUENCE [LARGE SCALE GENOMIC DNA]</scope>
    <source>
        <strain>ATCC BAA-1250 / SPB7</strain>
    </source>
</reference>
<protein>
    <recommendedName>
        <fullName evidence="1">Multidrug resistance protein MdtK</fullName>
    </recommendedName>
    <alternativeName>
        <fullName evidence="1">Multidrug-efflux transporter</fullName>
    </alternativeName>
</protein>
<organism>
    <name type="scientific">Salmonella paratyphi B (strain ATCC BAA-1250 / SPB7)</name>
    <dbReference type="NCBI Taxonomy" id="1016998"/>
    <lineage>
        <taxon>Bacteria</taxon>
        <taxon>Pseudomonadati</taxon>
        <taxon>Pseudomonadota</taxon>
        <taxon>Gammaproteobacteria</taxon>
        <taxon>Enterobacterales</taxon>
        <taxon>Enterobacteriaceae</taxon>
        <taxon>Salmonella</taxon>
    </lineage>
</organism>
<sequence>MQKYTSEARQLLALAIPVILAQVAQTAMGFVDTVMAGGYSATDMAAVAIGTSIWLPAILFGHGLLLALTPVIAQLNGSGRRERIAHQVRQGFWLAGFVSVLVMIVLWNAGYIIRSMHNIDPALADKAVGYLRALLWGAPGYLFFQVARNQCEGLAKTKPGMVMGFLGLLVNIPVNYIFIYGHFGMPELGGIGCGVATAAVYWVMFIAMLSYIKHARSMRDIRNETGFGKPDSVVMKRLIQLGLPIALALFFEVTLFAVVALLVSPLGIVDVAGHQIALNFSSLMFVLPMSLAAAVTIRVGYRLGQGSTLDAQTAARTGLGVGICMAVVTAIFTVTLRKHIALLYNDNPEVVALAAQLMLLAAVYQISDSIQVIGSGILRGYKDTRSIFFITFTAYWVLGLPSGYILALTDLVVDRMGPAGFWMGFIIGLTSAAVLMMLRMRYLQRQPSAIILQRAAR</sequence>
<feature type="chain" id="PRO_1000080332" description="Multidrug resistance protein MdtK">
    <location>
        <begin position="1"/>
        <end position="457"/>
    </location>
</feature>
<feature type="transmembrane region" description="Helical" evidence="1">
    <location>
        <begin position="11"/>
        <end position="31"/>
    </location>
</feature>
<feature type="transmembrane region" description="Helical" evidence="1">
    <location>
        <begin position="53"/>
        <end position="73"/>
    </location>
</feature>
<feature type="transmembrane region" description="Helical" evidence="1">
    <location>
        <begin position="93"/>
        <end position="113"/>
    </location>
</feature>
<feature type="transmembrane region" description="Helical" evidence="1">
    <location>
        <begin position="127"/>
        <end position="147"/>
    </location>
</feature>
<feature type="transmembrane region" description="Helical" evidence="1">
    <location>
        <begin position="160"/>
        <end position="180"/>
    </location>
</feature>
<feature type="transmembrane region" description="Helical" evidence="1">
    <location>
        <begin position="188"/>
        <end position="208"/>
    </location>
</feature>
<feature type="transmembrane region" description="Helical" evidence="1">
    <location>
        <begin position="243"/>
        <end position="263"/>
    </location>
</feature>
<feature type="transmembrane region" description="Helical" evidence="1">
    <location>
        <begin position="276"/>
        <end position="296"/>
    </location>
</feature>
<feature type="transmembrane region" description="Helical" evidence="1">
    <location>
        <begin position="314"/>
        <end position="334"/>
    </location>
</feature>
<feature type="transmembrane region" description="Helical" evidence="1">
    <location>
        <begin position="350"/>
        <end position="370"/>
    </location>
</feature>
<feature type="transmembrane region" description="Helical" evidence="1">
    <location>
        <begin position="387"/>
        <end position="407"/>
    </location>
</feature>
<feature type="transmembrane region" description="Helical" evidence="1">
    <location>
        <begin position="418"/>
        <end position="438"/>
    </location>
</feature>
<evidence type="ECO:0000255" key="1">
    <source>
        <dbReference type="HAMAP-Rule" id="MF_00400"/>
    </source>
</evidence>
<name>MDTK_SALPB</name>
<gene>
    <name evidence="1" type="primary">mdtK</name>
    <name type="ordered locus">SPAB_01899</name>
</gene>
<accession>A9N0Y8</accession>
<dbReference type="EMBL" id="CP000886">
    <property type="protein sequence ID" value="ABX67291.1"/>
    <property type="molecule type" value="Genomic_DNA"/>
</dbReference>
<dbReference type="RefSeq" id="WP_001175081.1">
    <property type="nucleotide sequence ID" value="NC_010102.1"/>
</dbReference>
<dbReference type="SMR" id="A9N0Y8"/>
<dbReference type="KEGG" id="spq:SPAB_01899"/>
<dbReference type="PATRIC" id="fig|1016998.12.peg.1791"/>
<dbReference type="HOGENOM" id="CLU_012893_6_0_6"/>
<dbReference type="BioCyc" id="SENT1016998:SPAB_RS07720-MONOMER"/>
<dbReference type="Proteomes" id="UP000008556">
    <property type="component" value="Chromosome"/>
</dbReference>
<dbReference type="GO" id="GO:0005886">
    <property type="term" value="C:plasma membrane"/>
    <property type="evidence" value="ECO:0007669"/>
    <property type="project" value="UniProtKB-SubCell"/>
</dbReference>
<dbReference type="GO" id="GO:0015297">
    <property type="term" value="F:antiporter activity"/>
    <property type="evidence" value="ECO:0007669"/>
    <property type="project" value="UniProtKB-UniRule"/>
</dbReference>
<dbReference type="GO" id="GO:0042910">
    <property type="term" value="F:xenobiotic transmembrane transporter activity"/>
    <property type="evidence" value="ECO:0007669"/>
    <property type="project" value="UniProtKB-UniRule"/>
</dbReference>
<dbReference type="GO" id="GO:0006814">
    <property type="term" value="P:sodium ion transport"/>
    <property type="evidence" value="ECO:0007669"/>
    <property type="project" value="UniProtKB-UniRule"/>
</dbReference>
<dbReference type="GO" id="GO:0006855">
    <property type="term" value="P:xenobiotic transmembrane transport"/>
    <property type="evidence" value="ECO:0007669"/>
    <property type="project" value="UniProtKB-UniRule"/>
</dbReference>
<dbReference type="CDD" id="cd13131">
    <property type="entry name" value="MATE_NorM_like"/>
    <property type="match status" value="1"/>
</dbReference>
<dbReference type="HAMAP" id="MF_00400">
    <property type="entry name" value="MdtK"/>
    <property type="match status" value="1"/>
</dbReference>
<dbReference type="InterPro" id="IPR002528">
    <property type="entry name" value="MATE_fam"/>
</dbReference>
<dbReference type="InterPro" id="IPR050222">
    <property type="entry name" value="MATE_MdtK"/>
</dbReference>
<dbReference type="InterPro" id="IPR048279">
    <property type="entry name" value="MdtK-like"/>
</dbReference>
<dbReference type="InterPro" id="IPR022913">
    <property type="entry name" value="Multidrug-R_MdtK"/>
</dbReference>
<dbReference type="NCBIfam" id="TIGR00797">
    <property type="entry name" value="matE"/>
    <property type="match status" value="1"/>
</dbReference>
<dbReference type="PANTHER" id="PTHR43298:SF2">
    <property type="entry name" value="FMN_FAD EXPORTER YEEO-RELATED"/>
    <property type="match status" value="1"/>
</dbReference>
<dbReference type="PANTHER" id="PTHR43298">
    <property type="entry name" value="MULTIDRUG RESISTANCE PROTEIN NORM-RELATED"/>
    <property type="match status" value="1"/>
</dbReference>
<dbReference type="Pfam" id="PF01554">
    <property type="entry name" value="MatE"/>
    <property type="match status" value="2"/>
</dbReference>
<dbReference type="PIRSF" id="PIRSF006603">
    <property type="entry name" value="DinF"/>
    <property type="match status" value="1"/>
</dbReference>
<comment type="function">
    <text evidence="1">Multidrug efflux pump that functions probably as a Na(+)/drug antiporter.</text>
</comment>
<comment type="subcellular location">
    <subcellularLocation>
        <location evidence="1">Cell inner membrane</location>
        <topology evidence="1">Multi-pass membrane protein</topology>
    </subcellularLocation>
</comment>
<comment type="similarity">
    <text evidence="1">Belongs to the multi antimicrobial extrusion (MATE) (TC 2.A.66.1) family. MdtK subfamily.</text>
</comment>
<keyword id="KW-0050">Antiport</keyword>
<keyword id="KW-0997">Cell inner membrane</keyword>
<keyword id="KW-1003">Cell membrane</keyword>
<keyword id="KW-0406">Ion transport</keyword>
<keyword id="KW-0472">Membrane</keyword>
<keyword id="KW-0915">Sodium</keyword>
<keyword id="KW-0739">Sodium transport</keyword>
<keyword id="KW-0812">Transmembrane</keyword>
<keyword id="KW-1133">Transmembrane helix</keyword>
<keyword id="KW-0813">Transport</keyword>